<sequence>MTYMQLRSSTKKVKINEANNMAVVFEKNKPPSSIKRAELKTVLIPKPIIKKGIICGLEKYAAIYKAIAKHPLVLGKCPSRPYHTINVMTKSQNALILTPSMDINKTQHLLLKHSLLDYIGLKSNMAQFEALYGSVLEPMTSKEMLSFQDLFFETKRRTEDIIFVLNTICEHRFVHPVRASVTPQVFKDIVEKYFFLFPAKDKSNSINFAASVVEIICNGEPFSKVIQYVNAYMDIKEHTTMNNLIKIYALLTT</sequence>
<accession>Q01006</accession>
<gene>
    <name type="primary">23</name>
</gene>
<feature type="chain" id="PRO_0000116270" description="Uncharacterized gene 23 protein">
    <location>
        <begin position="1"/>
        <end position="253"/>
    </location>
</feature>
<dbReference type="EMBL" id="X64346">
    <property type="protein sequence ID" value="CAA45646.1"/>
    <property type="molecule type" value="Genomic_DNA"/>
</dbReference>
<dbReference type="RefSeq" id="NP_040225.1">
    <property type="nucleotide sequence ID" value="NC_001350.1"/>
</dbReference>
<dbReference type="KEGG" id="vg:1682455"/>
<dbReference type="Proteomes" id="UP000000587">
    <property type="component" value="Segment"/>
</dbReference>
<dbReference type="InterPro" id="IPR006772">
    <property type="entry name" value="Herpes_BTRF1"/>
</dbReference>
<dbReference type="Pfam" id="PF04682">
    <property type="entry name" value="Herpes_BTRF1"/>
    <property type="match status" value="1"/>
</dbReference>
<proteinExistence type="inferred from homology"/>
<evidence type="ECO:0000305" key="1"/>
<comment type="similarity">
    <text evidence="1">Belongs to the herpesviridae BTRF1 family.</text>
</comment>
<keyword id="KW-1185">Reference proteome</keyword>
<organism>
    <name type="scientific">Saimiriine herpesvirus 2 (strain 11)</name>
    <name type="common">SaHV-2</name>
    <name type="synonym">Herpesvirus saimiri</name>
    <dbReference type="NCBI Taxonomy" id="10383"/>
    <lineage>
        <taxon>Viruses</taxon>
        <taxon>Duplodnaviria</taxon>
        <taxon>Heunggongvirae</taxon>
        <taxon>Peploviricota</taxon>
        <taxon>Herviviricetes</taxon>
        <taxon>Herpesvirales</taxon>
        <taxon>Orthoherpesviridae</taxon>
        <taxon>Gammaherpesvirinae</taxon>
        <taxon>Rhadinovirus</taxon>
        <taxon>Rhadinovirus saimiriinegamma2</taxon>
        <taxon>Saimiriine herpesvirus 2</taxon>
    </lineage>
</organism>
<name>VG23_SHV21</name>
<protein>
    <recommendedName>
        <fullName>Uncharacterized gene 23 protein</fullName>
    </recommendedName>
</protein>
<organismHost>
    <name type="scientific">Saimiri sciureus</name>
    <name type="common">Common squirrel monkey</name>
    <dbReference type="NCBI Taxonomy" id="9521"/>
</organismHost>
<reference key="1">
    <citation type="journal article" date="1992" name="J. Virol.">
        <title>Primary structure of the herpesvirus saimiri genome.</title>
        <authorList>
            <person name="Albrecht J.-C."/>
            <person name="Nicholas J."/>
            <person name="Biller D."/>
            <person name="Cameron K.R."/>
            <person name="Biesinger B."/>
            <person name="Newman C."/>
            <person name="Wittmann S."/>
            <person name="Craxton M.A."/>
            <person name="Coleman H."/>
            <person name="Fleckenstein B."/>
            <person name="Honess R.W."/>
        </authorList>
    </citation>
    <scope>NUCLEOTIDE SEQUENCE [LARGE SCALE GENOMIC DNA]</scope>
</reference>